<reference key="1">
    <citation type="online journal article" date="1999" name="Plant Gene Register">
        <title>Cloning and sequencing of chloroplast genes for ATP synthase beta and epsilon subunits (atpB and atpE) of Alfalfa (Medicago sativa).</title>
        <authorList>
            <person name="Nugent G.D."/>
            <person name="Stalker D.M."/>
            <person name="Stevenson T.W."/>
        </authorList>
        <locator>PGR99-142</locator>
    </citation>
    <scope>NUCLEOTIDE SEQUENCE [GENOMIC DNA]</scope>
</reference>
<organism>
    <name type="scientific">Medicago sativa</name>
    <name type="common">Alfalfa</name>
    <dbReference type="NCBI Taxonomy" id="3879"/>
    <lineage>
        <taxon>Eukaryota</taxon>
        <taxon>Viridiplantae</taxon>
        <taxon>Streptophyta</taxon>
        <taxon>Embryophyta</taxon>
        <taxon>Tracheophyta</taxon>
        <taxon>Spermatophyta</taxon>
        <taxon>Magnoliopsida</taxon>
        <taxon>eudicotyledons</taxon>
        <taxon>Gunneridae</taxon>
        <taxon>Pentapetalae</taxon>
        <taxon>rosids</taxon>
        <taxon>fabids</taxon>
        <taxon>Fabales</taxon>
        <taxon>Fabaceae</taxon>
        <taxon>Papilionoideae</taxon>
        <taxon>50 kb inversion clade</taxon>
        <taxon>NPAAA clade</taxon>
        <taxon>Hologalegina</taxon>
        <taxon>IRL clade</taxon>
        <taxon>Trifolieae</taxon>
        <taxon>Medicago</taxon>
    </lineage>
</organism>
<dbReference type="EMBL" id="AF163770">
    <property type="protein sequence ID" value="AAD46915.1"/>
    <property type="molecule type" value="Genomic_DNA"/>
</dbReference>
<dbReference type="SMR" id="Q9TKI6"/>
<dbReference type="GO" id="GO:0009535">
    <property type="term" value="C:chloroplast thylakoid membrane"/>
    <property type="evidence" value="ECO:0007669"/>
    <property type="project" value="UniProtKB-SubCell"/>
</dbReference>
<dbReference type="GO" id="GO:0045259">
    <property type="term" value="C:proton-transporting ATP synthase complex"/>
    <property type="evidence" value="ECO:0007669"/>
    <property type="project" value="UniProtKB-KW"/>
</dbReference>
<dbReference type="GO" id="GO:0005524">
    <property type="term" value="F:ATP binding"/>
    <property type="evidence" value="ECO:0007669"/>
    <property type="project" value="UniProtKB-UniRule"/>
</dbReference>
<dbReference type="GO" id="GO:0046933">
    <property type="term" value="F:proton-transporting ATP synthase activity, rotational mechanism"/>
    <property type="evidence" value="ECO:0007669"/>
    <property type="project" value="UniProtKB-UniRule"/>
</dbReference>
<dbReference type="CDD" id="cd12152">
    <property type="entry name" value="F1-ATPase_delta"/>
    <property type="match status" value="1"/>
</dbReference>
<dbReference type="FunFam" id="2.60.15.10:FF:000002">
    <property type="entry name" value="ATP synthase epsilon chain, chloroplastic"/>
    <property type="match status" value="1"/>
</dbReference>
<dbReference type="Gene3D" id="6.10.140.480">
    <property type="match status" value="1"/>
</dbReference>
<dbReference type="Gene3D" id="2.60.15.10">
    <property type="entry name" value="F0F1 ATP synthase delta/epsilon subunit, N-terminal"/>
    <property type="match status" value="1"/>
</dbReference>
<dbReference type="HAMAP" id="MF_00530">
    <property type="entry name" value="ATP_synth_epsil_bac"/>
    <property type="match status" value="1"/>
</dbReference>
<dbReference type="InterPro" id="IPR001469">
    <property type="entry name" value="ATP_synth_F1_dsu/esu"/>
</dbReference>
<dbReference type="InterPro" id="IPR020546">
    <property type="entry name" value="ATP_synth_F1_dsu/esu_N"/>
</dbReference>
<dbReference type="InterPro" id="IPR020547">
    <property type="entry name" value="ATP_synth_F1_esu_C"/>
</dbReference>
<dbReference type="InterPro" id="IPR036771">
    <property type="entry name" value="ATPsynth_dsu/esu_N"/>
</dbReference>
<dbReference type="NCBIfam" id="TIGR01216">
    <property type="entry name" value="ATP_synt_epsi"/>
    <property type="match status" value="1"/>
</dbReference>
<dbReference type="PANTHER" id="PTHR13822">
    <property type="entry name" value="ATP SYNTHASE DELTA/EPSILON CHAIN"/>
    <property type="match status" value="1"/>
</dbReference>
<dbReference type="PANTHER" id="PTHR13822:SF10">
    <property type="entry name" value="ATP SYNTHASE EPSILON CHAIN, CHLOROPLASTIC"/>
    <property type="match status" value="1"/>
</dbReference>
<dbReference type="Pfam" id="PF00401">
    <property type="entry name" value="ATP-synt_DE"/>
    <property type="match status" value="1"/>
</dbReference>
<dbReference type="Pfam" id="PF02823">
    <property type="entry name" value="ATP-synt_DE_N"/>
    <property type="match status" value="1"/>
</dbReference>
<dbReference type="SUPFAM" id="SSF51344">
    <property type="entry name" value="Epsilon subunit of F1F0-ATP synthase N-terminal domain"/>
    <property type="match status" value="1"/>
</dbReference>
<gene>
    <name evidence="1" type="primary">atpE</name>
</gene>
<geneLocation type="chloroplast"/>
<sequence>MTLNLCVLTPNRTVWDSEVKEIILSTNSGQIGVLKNHAPIATALDIGILKIRLTNQQWVTMALMGGFARIGNNEITILVNDAEKSIDIDPQEAQQTLKIAEANLNKAEGKRQTIEANLALRRARTRVETILESINRF</sequence>
<evidence type="ECO:0000255" key="1">
    <source>
        <dbReference type="HAMAP-Rule" id="MF_00530"/>
    </source>
</evidence>
<protein>
    <recommendedName>
        <fullName evidence="1">ATP synthase epsilon chain, chloroplastic</fullName>
    </recommendedName>
    <alternativeName>
        <fullName evidence="1">ATP synthase F1 sector epsilon subunit</fullName>
    </alternativeName>
    <alternativeName>
        <fullName evidence="1">F-ATPase epsilon subunit</fullName>
    </alternativeName>
</protein>
<comment type="function">
    <text evidence="1">Produces ATP from ADP in the presence of a proton gradient across the membrane.</text>
</comment>
<comment type="subunit">
    <text evidence="1">F-type ATPases have 2 components, CF(1) - the catalytic core - and CF(0) - the membrane proton channel. CF(1) has five subunits: alpha(3), beta(3), gamma(1), delta(1), epsilon(1). CF(0) has three main subunits: a, b and c.</text>
</comment>
<comment type="subcellular location">
    <subcellularLocation>
        <location evidence="1">Plastid</location>
        <location evidence="1">Chloroplast thylakoid membrane</location>
        <topology evidence="1">Peripheral membrane protein</topology>
    </subcellularLocation>
</comment>
<comment type="similarity">
    <text evidence="1">Belongs to the ATPase epsilon chain family.</text>
</comment>
<keyword id="KW-0066">ATP synthesis</keyword>
<keyword id="KW-0139">CF(1)</keyword>
<keyword id="KW-0150">Chloroplast</keyword>
<keyword id="KW-0375">Hydrogen ion transport</keyword>
<keyword id="KW-0406">Ion transport</keyword>
<keyword id="KW-0472">Membrane</keyword>
<keyword id="KW-0934">Plastid</keyword>
<keyword id="KW-0793">Thylakoid</keyword>
<keyword id="KW-0813">Transport</keyword>
<accession>Q9TKI6</accession>
<name>ATPE_MEDSA</name>
<proteinExistence type="inferred from homology"/>
<feature type="chain" id="PRO_0000188274" description="ATP synthase epsilon chain, chloroplastic">
    <location>
        <begin position="1"/>
        <end position="137"/>
    </location>
</feature>